<evidence type="ECO:0000250" key="1">
    <source>
        <dbReference type="UniProtKB" id="P58426"/>
    </source>
</evidence>
<evidence type="ECO:0000269" key="2">
    <source>
    </source>
</evidence>
<evidence type="ECO:0000269" key="3">
    <source ref="2"/>
</evidence>
<evidence type="ECO:0000305" key="4"/>
<evidence type="ECO:0000305" key="5">
    <source>
    </source>
</evidence>
<evidence type="ECO:0000305" key="6">
    <source ref="2"/>
</evidence>
<name>TXHP3_HETVE</name>
<protein>
    <recommendedName>
        <fullName evidence="4">Kappa-sparatoxin-Hv1c</fullName>
        <shortName evidence="4">Kappa-SPRTX-Hv1c</shortName>
    </recommendedName>
    <alternativeName>
        <fullName>Heteropodatoxin-3</fullName>
        <shortName>HpTX3</shortName>
    </alternativeName>
    <alternativeName>
        <fullName>Toxin AU5C/KJ7</fullName>
    </alternativeName>
</protein>
<keyword id="KW-0027">Amidation</keyword>
<keyword id="KW-0108">Calcium channel impairing toxin</keyword>
<keyword id="KW-0903">Direct protein sequencing</keyword>
<keyword id="KW-1015">Disulfide bond</keyword>
<keyword id="KW-0872">Ion channel impairing toxin</keyword>
<keyword id="KW-0960">Knottin</keyword>
<keyword id="KW-0528">Neurotoxin</keyword>
<keyword id="KW-0632">Potassium channel impairing toxin</keyword>
<keyword id="KW-0964">Secreted</keyword>
<keyword id="KW-0800">Toxin</keyword>
<keyword id="KW-1220">Voltage-gated potassium channel impairing toxin</keyword>
<proteinExistence type="evidence at protein level"/>
<feature type="peptide" id="PRO_0000045020" description="Kappa-sparatoxin-Hv1c" evidence="2 3">
    <location>
        <begin position="1"/>
        <end position="31"/>
    </location>
</feature>
<feature type="modified residue" description="Tryptophan amide" evidence="2">
    <location>
        <position position="31"/>
    </location>
</feature>
<feature type="disulfide bond" evidence="1">
    <location>
        <begin position="2"/>
        <end position="16"/>
    </location>
</feature>
<feature type="disulfide bond" evidence="1">
    <location>
        <begin position="9"/>
        <end position="21"/>
    </location>
</feature>
<feature type="disulfide bond" evidence="1">
    <location>
        <begin position="15"/>
        <end position="25"/>
    </location>
</feature>
<comment type="function">
    <text evidence="2 3">Blocks transient outward voltage-gated potassium channels in rat ventricular myocytes (thus prolonging action-potential duration) and rat Kv4.2/KCNA4 channels expressed in Xenopus oocytes. Is also a weak blocker of calcium channels in rat cerebellar granule cells.</text>
</comment>
<comment type="subcellular location">
    <subcellularLocation>
        <location evidence="2 3">Secreted</location>
    </subcellularLocation>
</comment>
<comment type="tissue specificity">
    <text evidence="5 6">Expressed by the venom gland.</text>
</comment>
<comment type="domain">
    <text evidence="1">The presence of a 'disulfide through disulfide knot' structurally defines this protein as a knottin.</text>
</comment>
<comment type="mass spectrometry"/>
<comment type="similarity">
    <text evidence="4">Belongs to the neurotoxin 10 (Hwtx-1) family. 20 (HpTX3) subfamily.</text>
</comment>
<reference key="1">
    <citation type="journal article" date="1997" name="Mol. Pharmacol.">
        <title>Heteropodatoxins: peptides isolated from spider venom that block Kv4.2 potassium channels.</title>
        <authorList>
            <person name="Sanguinetti M.C."/>
            <person name="Johnson J.H."/>
            <person name="Hammerland L.G."/>
            <person name="Kelbaugh P.R."/>
            <person name="Volkmann R.A."/>
            <person name="Saccomano N.A."/>
            <person name="Mueller A.L."/>
        </authorList>
    </citation>
    <scope>PROTEIN SEQUENCE</scope>
    <scope>FUNCTION</scope>
    <scope>SUBCELLULAR LOCATION</scope>
    <scope>AMIDATION AT TRP-31</scope>
    <scope>MASS SPECTROMETRY</scope>
    <source>
        <tissue>Venom</tissue>
    </source>
</reference>
<reference key="2">
    <citation type="patent" date="1997-05-06" number="US5627154">
        <title>Calcium channel blocking polypeptides from Heteropoda venatoria.</title>
        <authorList>
            <person name="Kelbaugh P.R."/>
            <person name="Saccomano N.A."/>
            <person name="Volkmann R.A."/>
        </authorList>
    </citation>
    <scope>PROTEIN SEQUENCE</scope>
    <scope>FUNCTION</scope>
    <scope>SUBCELLULAR LOCATION</scope>
    <scope>DISULFIDE BONDS</scope>
    <scope>MASS SPECTROMETRY</scope>
    <source>
        <tissue>Venom</tissue>
    </source>
</reference>
<accession>P58427</accession>
<sequence>ECGTLFSGCSTHADCCEGFICKLWCRYERTW</sequence>
<dbReference type="SMR" id="P58427"/>
<dbReference type="ArachnoServer" id="AS000346">
    <property type="toxin name" value="kappa-sparatoxin-Hv1c"/>
</dbReference>
<dbReference type="GO" id="GO:0005576">
    <property type="term" value="C:extracellular region"/>
    <property type="evidence" value="ECO:0007669"/>
    <property type="project" value="UniProtKB-SubCell"/>
</dbReference>
<dbReference type="GO" id="GO:0005246">
    <property type="term" value="F:calcium channel regulator activity"/>
    <property type="evidence" value="ECO:0007669"/>
    <property type="project" value="UniProtKB-KW"/>
</dbReference>
<dbReference type="GO" id="GO:0008200">
    <property type="term" value="F:ion channel inhibitor activity"/>
    <property type="evidence" value="ECO:0007669"/>
    <property type="project" value="InterPro"/>
</dbReference>
<dbReference type="GO" id="GO:0015459">
    <property type="term" value="F:potassium channel regulator activity"/>
    <property type="evidence" value="ECO:0007669"/>
    <property type="project" value="UniProtKB-KW"/>
</dbReference>
<dbReference type="GO" id="GO:0090729">
    <property type="term" value="F:toxin activity"/>
    <property type="evidence" value="ECO:0007669"/>
    <property type="project" value="UniProtKB-KW"/>
</dbReference>
<dbReference type="InterPro" id="IPR011696">
    <property type="entry name" value="Huwentoxin-1"/>
</dbReference>
<dbReference type="Pfam" id="PF07740">
    <property type="entry name" value="Toxin_12"/>
    <property type="match status" value="1"/>
</dbReference>
<dbReference type="SUPFAM" id="SSF57059">
    <property type="entry name" value="omega toxin-like"/>
    <property type="match status" value="1"/>
</dbReference>
<organism>
    <name type="scientific">Heteropoda venatoria</name>
    <name type="common">Brown huntsman spider</name>
    <name type="synonym">Aranea venatoria</name>
    <dbReference type="NCBI Taxonomy" id="152925"/>
    <lineage>
        <taxon>Eukaryota</taxon>
        <taxon>Metazoa</taxon>
        <taxon>Ecdysozoa</taxon>
        <taxon>Arthropoda</taxon>
        <taxon>Chelicerata</taxon>
        <taxon>Arachnida</taxon>
        <taxon>Araneae</taxon>
        <taxon>Araneomorphae</taxon>
        <taxon>Entelegynae</taxon>
        <taxon>Dionycha</taxon>
        <taxon>Sparassidae</taxon>
        <taxon>Heteropoda</taxon>
    </lineage>
</organism>